<organism>
    <name type="scientific">Bacillus anthracis</name>
    <dbReference type="NCBI Taxonomy" id="1392"/>
    <lineage>
        <taxon>Bacteria</taxon>
        <taxon>Bacillati</taxon>
        <taxon>Bacillota</taxon>
        <taxon>Bacilli</taxon>
        <taxon>Bacillales</taxon>
        <taxon>Bacillaceae</taxon>
        <taxon>Bacillus</taxon>
        <taxon>Bacillus cereus group</taxon>
    </lineage>
</organism>
<dbReference type="EMBL" id="AE016879">
    <property type="protein sequence ID" value="AAP24249.1"/>
    <property type="molecule type" value="Genomic_DNA"/>
</dbReference>
<dbReference type="EMBL" id="AE017334">
    <property type="protein sequence ID" value="AAT29282.1"/>
    <property type="molecule type" value="Genomic_DNA"/>
</dbReference>
<dbReference type="EMBL" id="AE017225">
    <property type="protein sequence ID" value="AAT52536.1"/>
    <property type="molecule type" value="Genomic_DNA"/>
</dbReference>
<dbReference type="RefSeq" id="NP_842763.1">
    <property type="nucleotide sequence ID" value="NC_003997.3"/>
</dbReference>
<dbReference type="RefSeq" id="WP_000511993.1">
    <property type="nucleotide sequence ID" value="NZ_WXXJ01000014.1"/>
</dbReference>
<dbReference type="SMR" id="Q81VJ7"/>
<dbReference type="IntAct" id="Q81VJ7">
    <property type="interactions" value="1"/>
</dbReference>
<dbReference type="STRING" id="261594.GBAA_0200"/>
<dbReference type="DNASU" id="1086378"/>
<dbReference type="GeneID" id="45020252"/>
<dbReference type="KEGG" id="ban:BA_0200"/>
<dbReference type="KEGG" id="bar:GBAA_0200"/>
<dbReference type="KEGG" id="bat:BAS0200"/>
<dbReference type="PATRIC" id="fig|198094.11.peg.197"/>
<dbReference type="eggNOG" id="COG4975">
    <property type="taxonomic scope" value="Bacteria"/>
</dbReference>
<dbReference type="HOGENOM" id="CLU_076024_0_0_9"/>
<dbReference type="OMA" id="QIQFIIG"/>
<dbReference type="OrthoDB" id="1452595at2"/>
<dbReference type="Proteomes" id="UP000000427">
    <property type="component" value="Chromosome"/>
</dbReference>
<dbReference type="Proteomes" id="UP000000594">
    <property type="component" value="Chromosome"/>
</dbReference>
<dbReference type="GO" id="GO:0005886">
    <property type="term" value="C:plasma membrane"/>
    <property type="evidence" value="ECO:0007669"/>
    <property type="project" value="UniProtKB-SubCell"/>
</dbReference>
<dbReference type="GO" id="GO:0015144">
    <property type="term" value="F:carbohydrate transmembrane transporter activity"/>
    <property type="evidence" value="ECO:0007669"/>
    <property type="project" value="InterPro"/>
</dbReference>
<dbReference type="CDD" id="cd23112">
    <property type="entry name" value="glucose_uptake_GlcU"/>
    <property type="match status" value="1"/>
</dbReference>
<dbReference type="Gene3D" id="1.10.3730.20">
    <property type="match status" value="1"/>
</dbReference>
<dbReference type="InterPro" id="IPR010651">
    <property type="entry name" value="Sugar_transport"/>
</dbReference>
<dbReference type="PANTHER" id="PTHR16119">
    <property type="entry name" value="TRANSMEMBRANE PROTEIN 144"/>
    <property type="match status" value="1"/>
</dbReference>
<dbReference type="PANTHER" id="PTHR16119:SF17">
    <property type="entry name" value="TRANSMEMBRANE PROTEIN 144"/>
    <property type="match status" value="1"/>
</dbReference>
<dbReference type="Pfam" id="PF06800">
    <property type="entry name" value="Sugar_transport"/>
    <property type="match status" value="1"/>
</dbReference>
<dbReference type="SUPFAM" id="SSF103481">
    <property type="entry name" value="Multidrug resistance efflux transporter EmrE"/>
    <property type="match status" value="2"/>
</dbReference>
<proteinExistence type="inferred from homology"/>
<accession>Q81VJ7</accession>
<accession>Q6I4J5</accession>
<accession>Q6KY97</accession>
<comment type="subcellular location">
    <subcellularLocation>
        <location evidence="2">Cell membrane</location>
        <topology evidence="2">Multi-pass membrane protein</topology>
    </subcellularLocation>
</comment>
<comment type="similarity">
    <text evidence="2">Belongs to the GRP transporter (TC 2.A.7.5) family.</text>
</comment>
<keyword id="KW-1003">Cell membrane</keyword>
<keyword id="KW-0472">Membrane</keyword>
<keyword id="KW-1185">Reference proteome</keyword>
<keyword id="KW-0762">Sugar transport</keyword>
<keyword id="KW-0812">Transmembrane</keyword>
<keyword id="KW-1133">Transmembrane helix</keyword>
<keyword id="KW-0813">Transport</keyword>
<protein>
    <recommendedName>
        <fullName>Putative sugar uptake protein BA_0200/GBAA_0200/BAS0200</fullName>
    </recommendedName>
</protein>
<name>Y200_BACAN</name>
<evidence type="ECO:0000255" key="1"/>
<evidence type="ECO:0000305" key="2"/>
<gene>
    <name type="ordered locus">BA_0200</name>
    <name type="ordered locus">GBAA_0200</name>
    <name type="ordered locus">BAS0200</name>
</gene>
<feature type="chain" id="PRO_0000213645" description="Putative sugar uptake protein BA_0200/GBAA_0200/BAS0200">
    <location>
        <begin position="1"/>
        <end position="283"/>
    </location>
</feature>
<feature type="transmembrane region" description="Helical" evidence="1">
    <location>
        <begin position="4"/>
        <end position="21"/>
    </location>
</feature>
<feature type="transmembrane region" description="Helical" evidence="1">
    <location>
        <begin position="26"/>
        <end position="48"/>
    </location>
</feature>
<feature type="transmembrane region" description="Helical" evidence="1">
    <location>
        <begin position="52"/>
        <end position="71"/>
    </location>
</feature>
<feature type="transmembrane region" description="Helical" evidence="1">
    <location>
        <begin position="84"/>
        <end position="106"/>
    </location>
</feature>
<feature type="transmembrane region" description="Helical" evidence="1">
    <location>
        <begin position="110"/>
        <end position="132"/>
    </location>
</feature>
<feature type="transmembrane region" description="Helical" evidence="1">
    <location>
        <begin position="151"/>
        <end position="173"/>
    </location>
</feature>
<feature type="transmembrane region" description="Helical" evidence="1">
    <location>
        <begin position="178"/>
        <end position="195"/>
    </location>
</feature>
<feature type="transmembrane region" description="Helical" evidence="1">
    <location>
        <begin position="208"/>
        <end position="230"/>
    </location>
</feature>
<feature type="transmembrane region" description="Helical" evidence="1">
    <location>
        <begin position="234"/>
        <end position="253"/>
    </location>
</feature>
<feature type="transmembrane region" description="Helical" evidence="1">
    <location>
        <begin position="260"/>
        <end position="279"/>
    </location>
</feature>
<feature type="sequence conflict" description="In Ref. 3; AAT52536." evidence="2" ref="3">
    <original>G</original>
    <variation>D</variation>
    <location>
        <position position="2"/>
    </location>
</feature>
<reference key="1">
    <citation type="journal article" date="2003" name="Nature">
        <title>The genome sequence of Bacillus anthracis Ames and comparison to closely related bacteria.</title>
        <authorList>
            <person name="Read T.D."/>
            <person name="Peterson S.N."/>
            <person name="Tourasse N.J."/>
            <person name="Baillie L.W."/>
            <person name="Paulsen I.T."/>
            <person name="Nelson K.E."/>
            <person name="Tettelin H."/>
            <person name="Fouts D.E."/>
            <person name="Eisen J.A."/>
            <person name="Gill S.R."/>
            <person name="Holtzapple E.K."/>
            <person name="Okstad O.A."/>
            <person name="Helgason E."/>
            <person name="Rilstone J."/>
            <person name="Wu M."/>
            <person name="Kolonay J.F."/>
            <person name="Beanan M.J."/>
            <person name="Dodson R.J."/>
            <person name="Brinkac L.M."/>
            <person name="Gwinn M.L."/>
            <person name="DeBoy R.T."/>
            <person name="Madpu R."/>
            <person name="Daugherty S.C."/>
            <person name="Durkin A.S."/>
            <person name="Haft D.H."/>
            <person name="Nelson W.C."/>
            <person name="Peterson J.D."/>
            <person name="Pop M."/>
            <person name="Khouri H.M."/>
            <person name="Radune D."/>
            <person name="Benton J.L."/>
            <person name="Mahamoud Y."/>
            <person name="Jiang L."/>
            <person name="Hance I.R."/>
            <person name="Weidman J.F."/>
            <person name="Berry K.J."/>
            <person name="Plaut R.D."/>
            <person name="Wolf A.M."/>
            <person name="Watkins K.L."/>
            <person name="Nierman W.C."/>
            <person name="Hazen A."/>
            <person name="Cline R.T."/>
            <person name="Redmond C."/>
            <person name="Thwaite J.E."/>
            <person name="White O."/>
            <person name="Salzberg S.L."/>
            <person name="Thomason B."/>
            <person name="Friedlander A.M."/>
            <person name="Koehler T.M."/>
            <person name="Hanna P.C."/>
            <person name="Kolstoe A.-B."/>
            <person name="Fraser C.M."/>
        </authorList>
    </citation>
    <scope>NUCLEOTIDE SEQUENCE [LARGE SCALE GENOMIC DNA]</scope>
    <source>
        <strain>Ames / isolate Porton</strain>
    </source>
</reference>
<reference key="2">
    <citation type="journal article" date="2009" name="J. Bacteriol.">
        <title>The complete genome sequence of Bacillus anthracis Ames 'Ancestor'.</title>
        <authorList>
            <person name="Ravel J."/>
            <person name="Jiang L."/>
            <person name="Stanley S.T."/>
            <person name="Wilson M.R."/>
            <person name="Decker R.S."/>
            <person name="Read T.D."/>
            <person name="Worsham P."/>
            <person name="Keim P.S."/>
            <person name="Salzberg S.L."/>
            <person name="Fraser-Liggett C.M."/>
            <person name="Rasko D.A."/>
        </authorList>
    </citation>
    <scope>NUCLEOTIDE SEQUENCE [LARGE SCALE GENOMIC DNA]</scope>
    <source>
        <strain>Ames ancestor</strain>
    </source>
</reference>
<reference key="3">
    <citation type="submission" date="2004-01" db="EMBL/GenBank/DDBJ databases">
        <title>Complete genome sequence of Bacillus anthracis Sterne.</title>
        <authorList>
            <person name="Brettin T.S."/>
            <person name="Bruce D."/>
            <person name="Challacombe J.F."/>
            <person name="Gilna P."/>
            <person name="Han C."/>
            <person name="Hill K."/>
            <person name="Hitchcock P."/>
            <person name="Jackson P."/>
            <person name="Keim P."/>
            <person name="Longmire J."/>
            <person name="Lucas S."/>
            <person name="Okinaka R."/>
            <person name="Richardson P."/>
            <person name="Rubin E."/>
            <person name="Tice H."/>
        </authorList>
    </citation>
    <scope>NUCLEOTIDE SEQUENCE [LARGE SCALE GENOMIC DNA]</scope>
    <source>
        <strain>Sterne</strain>
    </source>
</reference>
<sequence length="283" mass="30132">MGILLALLPAIAWGNILLVSVKMGGGAYSQTVGMTIGALFFATIMYVFTQPALTMTILIVGFISGLFWALGQVNQLKTVEKLGVSTTVTISTGMQLVATSIFGVIAFREWTTTTTIILGTIAILLIVVGVVFTSLDDKENAQPPGQLKKGLLTLIVSTFGYLVYVIIIRWYNIDGWSAILPQAVGMFVGAVVLTSKHKPFNKYAIRNALSGLLWGTGNLFLLLSLPRVGVATSFPLSQTGIVISTFGAIVFLGEKKTKRQLIFIALGSVLIIGGAVLLGMTKA</sequence>